<feature type="signal peptide" evidence="2">
    <location>
        <begin position="1"/>
        <end position="21"/>
    </location>
</feature>
<feature type="chain" id="PRO_0000001607" description="C-type natriuretic peptide prohormone">
    <location>
        <begin position="22"/>
        <end position="136"/>
    </location>
</feature>
<feature type="peptide" id="PRO_0000001608" description="CNP-39">
    <location>
        <begin position="98"/>
        <end position="136"/>
    </location>
</feature>
<feature type="peptide" id="PRO_0000001609" description="CNP-38">
    <location>
        <begin position="99"/>
        <end position="136"/>
    </location>
</feature>
<feature type="peptide" id="PRO_0000001610" description="CNP-22">
    <location>
        <begin position="115"/>
        <end position="136"/>
    </location>
</feature>
<feature type="disulfide bond" evidence="1">
    <location>
        <begin position="120"/>
        <end position="136"/>
    </location>
</feature>
<name>ANFC_TRISC</name>
<accession>P55208</accession>
<accession>Q98UI7</accession>
<reference key="1">
    <citation type="submission" date="2000-08" db="EMBL/GenBank/DDBJ databases">
        <title>C-type natriuretic peptide precursor mRNA of Triakis scyllia.</title>
        <authorList>
            <person name="Kawakoshi A."/>
            <person name="Hyodo S."/>
            <person name="Takei Y."/>
        </authorList>
    </citation>
    <scope>NUCLEOTIDE SEQUENCE [MRNA]</scope>
</reference>
<reference key="2">
    <citation type="journal article" date="1992" name="J. Endocrinol.">
        <title>Different molecular forms of C-type natriuretic peptide isolated from the brain and heart of an elasmobranch, Triakis scyllia.</title>
        <authorList>
            <person name="Suzuki R."/>
            <person name="Takahashi A."/>
            <person name="Takei Y."/>
        </authorList>
    </citation>
    <scope>PROTEIN SEQUENCE OF 22-136</scope>
    <source>
        <tissue>Brain</tissue>
        <tissue>Heart</tissue>
    </source>
</reference>
<organism>
    <name type="scientific">Triakis scyllium</name>
    <name type="common">Banded houndshark</name>
    <name type="synonym">Hemigaleus pingi</name>
    <dbReference type="NCBI Taxonomy" id="30494"/>
    <lineage>
        <taxon>Eukaryota</taxon>
        <taxon>Metazoa</taxon>
        <taxon>Chordata</taxon>
        <taxon>Craniata</taxon>
        <taxon>Vertebrata</taxon>
        <taxon>Chondrichthyes</taxon>
        <taxon>Elasmobranchii</taxon>
        <taxon>Galeomorphii</taxon>
        <taxon>Galeoidea</taxon>
        <taxon>Carcharhiniformes</taxon>
        <taxon>Triakidae</taxon>
        <taxon>Triakis</taxon>
    </lineage>
</organism>
<evidence type="ECO:0000250" key="1"/>
<evidence type="ECO:0000255" key="2"/>
<evidence type="ECO:0000305" key="3"/>
<dbReference type="EMBL" id="AB047081">
    <property type="protein sequence ID" value="BAB32433.1"/>
    <property type="molecule type" value="mRNA"/>
</dbReference>
<dbReference type="GO" id="GO:0005576">
    <property type="term" value="C:extracellular region"/>
    <property type="evidence" value="ECO:0007669"/>
    <property type="project" value="UniProtKB-SubCell"/>
</dbReference>
<dbReference type="GO" id="GO:0005179">
    <property type="term" value="F:hormone activity"/>
    <property type="evidence" value="ECO:0007669"/>
    <property type="project" value="UniProtKB-KW"/>
</dbReference>
<dbReference type="GO" id="GO:0097746">
    <property type="term" value="P:blood vessel diameter maintenance"/>
    <property type="evidence" value="ECO:0007669"/>
    <property type="project" value="UniProtKB-KW"/>
</dbReference>
<dbReference type="GO" id="GO:0006182">
    <property type="term" value="P:cGMP biosynthetic process"/>
    <property type="evidence" value="ECO:0000250"/>
    <property type="project" value="UniProtKB"/>
</dbReference>
<dbReference type="GO" id="GO:0007168">
    <property type="term" value="P:receptor guanylyl cyclase signaling pathway"/>
    <property type="evidence" value="ECO:0000250"/>
    <property type="project" value="UniProtKB"/>
</dbReference>
<dbReference type="InterPro" id="IPR002406">
    <property type="entry name" value="C_natriurtcpep"/>
</dbReference>
<dbReference type="InterPro" id="IPR000663">
    <property type="entry name" value="Natr_peptide"/>
</dbReference>
<dbReference type="InterPro" id="IPR030480">
    <property type="entry name" value="Natr_peptide_CS"/>
</dbReference>
<dbReference type="PANTHER" id="PTHR12167">
    <property type="entry name" value="C-TYPE NATRIURETIC PEPTIDE"/>
    <property type="match status" value="1"/>
</dbReference>
<dbReference type="PANTHER" id="PTHR12167:SF5">
    <property type="entry name" value="C-TYPE NATRIURETIC PEPTIDE 3-LIKE PRECURSOR"/>
    <property type="match status" value="1"/>
</dbReference>
<dbReference type="Pfam" id="PF00212">
    <property type="entry name" value="ANP"/>
    <property type="match status" value="1"/>
</dbReference>
<dbReference type="PRINTS" id="PR00713">
    <property type="entry name" value="CNATPEPTIDE"/>
</dbReference>
<dbReference type="PRINTS" id="PR00710">
    <property type="entry name" value="NATPEPTIDES"/>
</dbReference>
<dbReference type="SMART" id="SM00183">
    <property type="entry name" value="NAT_PEP"/>
    <property type="match status" value="1"/>
</dbReference>
<dbReference type="PROSITE" id="PS00263">
    <property type="entry name" value="NATRIURETIC_PEPTIDE"/>
    <property type="match status" value="1"/>
</dbReference>
<protein>
    <recommendedName>
        <fullName>C-type natriuretic peptide prohormone</fullName>
    </recommendedName>
    <alternativeName>
        <fullName>CNP-115</fullName>
    </alternativeName>
    <component>
        <recommendedName>
            <fullName>CNP-39</fullName>
        </recommendedName>
    </component>
    <component>
        <recommendedName>
            <fullName>CNP-38</fullName>
        </recommendedName>
    </component>
    <component>
        <recommendedName>
            <fullName>CNP-22</fullName>
        </recommendedName>
    </component>
</protein>
<sequence length="136" mass="15143">MSGQTSFYCGLLLVLLIQAQARPRSDDSLQTLSRLLEDEYGHYLPSDELNNEAQEMSPAASLPEFNADQSDLELPWDRESREIGGRPFRQEAVLARLLKDLSNNPLRFRGRSKKGPSRGCFGVKLDRIGAMSGLGC</sequence>
<comment type="function">
    <text evidence="1">Hormone which may be vasoactive and natriuretic. Has a cGMP-stimulating activity (By similarity).</text>
</comment>
<comment type="subcellular location">
    <subcellularLocation>
        <location>Secreted</location>
    </subcellularLocation>
</comment>
<comment type="tissue specificity">
    <text>CNP-115 is differentially processed to produce CNP-38 and CNP-39 in the heart and CNP-22 in the brain.</text>
</comment>
<comment type="similarity">
    <text evidence="3">Belongs to the natriuretic peptide family.</text>
</comment>
<proteinExistence type="evidence at protein level"/>
<keyword id="KW-0165">Cleavage on pair of basic residues</keyword>
<keyword id="KW-0903">Direct protein sequencing</keyword>
<keyword id="KW-1015">Disulfide bond</keyword>
<keyword id="KW-0372">Hormone</keyword>
<keyword id="KW-0964">Secreted</keyword>
<keyword id="KW-0732">Signal</keyword>
<keyword id="KW-0838">Vasoactive</keyword>